<gene>
    <name evidence="1" type="primary">fabR</name>
    <name type="ordered locus">EcE24377A_4504</name>
</gene>
<comment type="function">
    <text evidence="1">Represses the transcription of fabB, involved in unsaturated fatty acid (UFA) biosynthesis. By controlling UFA production, FabR directly influences the physical properties of the membrane bilayer.</text>
</comment>
<comment type="subunit">
    <text evidence="1">Homodimer.</text>
</comment>
<comment type="subcellular location">
    <subcellularLocation>
        <location evidence="1">Cytoplasm</location>
    </subcellularLocation>
</comment>
<sequence length="215" mass="24404">MGVRAQQKEKTRRSLVEAAFSQLSAERSFASLSLREVAREAGIAPTSFYRHFRDVDELGLTMVDESGLMLRQLMRQARQRIAKGGSVIRTSVSTFMEFIGNNPNAFRLLLRERSGTSAAFRAAVAREIQHFIAELADYLELENHMPRAFTEAQAEAMVTIVFSAGAEALDVGVEQRRQLEERLVLQLRMISKGAYYWYRREQEKTAIIPGNVKDE</sequence>
<reference key="1">
    <citation type="journal article" date="2008" name="J. Bacteriol.">
        <title>The pangenome structure of Escherichia coli: comparative genomic analysis of E. coli commensal and pathogenic isolates.</title>
        <authorList>
            <person name="Rasko D.A."/>
            <person name="Rosovitz M.J."/>
            <person name="Myers G.S.A."/>
            <person name="Mongodin E.F."/>
            <person name="Fricke W.F."/>
            <person name="Gajer P."/>
            <person name="Crabtree J."/>
            <person name="Sebaihia M."/>
            <person name="Thomson N.R."/>
            <person name="Chaudhuri R."/>
            <person name="Henderson I.R."/>
            <person name="Sperandio V."/>
            <person name="Ravel J."/>
        </authorList>
    </citation>
    <scope>NUCLEOTIDE SEQUENCE [LARGE SCALE GENOMIC DNA]</scope>
    <source>
        <strain>E24377A / ETEC</strain>
    </source>
</reference>
<feature type="chain" id="PRO_1000065868" description="HTH-type transcriptional repressor FabR">
    <location>
        <begin position="1"/>
        <end position="215"/>
    </location>
</feature>
<feature type="domain" description="HTH tetR-type" evidence="1">
    <location>
        <begin position="10"/>
        <end position="70"/>
    </location>
</feature>
<feature type="DNA-binding region" description="H-T-H motif" evidence="1">
    <location>
        <begin position="33"/>
        <end position="52"/>
    </location>
</feature>
<accession>A7ZUI3</accession>
<evidence type="ECO:0000255" key="1">
    <source>
        <dbReference type="HAMAP-Rule" id="MF_01190"/>
    </source>
</evidence>
<proteinExistence type="inferred from homology"/>
<dbReference type="EMBL" id="CP000800">
    <property type="protein sequence ID" value="ABV20029.1"/>
    <property type="molecule type" value="Genomic_DNA"/>
</dbReference>
<dbReference type="SMR" id="A7ZUI3"/>
<dbReference type="KEGG" id="ecw:EcE24377A_4504"/>
<dbReference type="HOGENOM" id="CLU_081861_0_0_6"/>
<dbReference type="Proteomes" id="UP000001122">
    <property type="component" value="Chromosome"/>
</dbReference>
<dbReference type="GO" id="GO:0005737">
    <property type="term" value="C:cytoplasm"/>
    <property type="evidence" value="ECO:0007669"/>
    <property type="project" value="UniProtKB-SubCell"/>
</dbReference>
<dbReference type="GO" id="GO:0003677">
    <property type="term" value="F:DNA binding"/>
    <property type="evidence" value="ECO:0007669"/>
    <property type="project" value="UniProtKB-KW"/>
</dbReference>
<dbReference type="GO" id="GO:0003700">
    <property type="term" value="F:DNA-binding transcription factor activity"/>
    <property type="evidence" value="ECO:0007669"/>
    <property type="project" value="UniProtKB-UniRule"/>
</dbReference>
<dbReference type="GO" id="GO:0006633">
    <property type="term" value="P:fatty acid biosynthetic process"/>
    <property type="evidence" value="ECO:0007669"/>
    <property type="project" value="UniProtKB-UniRule"/>
</dbReference>
<dbReference type="GO" id="GO:0045717">
    <property type="term" value="P:negative regulation of fatty acid biosynthetic process"/>
    <property type="evidence" value="ECO:0007669"/>
    <property type="project" value="UniProtKB-UniRule"/>
</dbReference>
<dbReference type="FunFam" id="1.10.10.60:FF:000034">
    <property type="entry name" value="HTH-type transcriptional repressor FabR"/>
    <property type="match status" value="1"/>
</dbReference>
<dbReference type="FunFam" id="1.10.357.10:FF:000001">
    <property type="entry name" value="HTH-type transcriptional repressor FabR"/>
    <property type="match status" value="1"/>
</dbReference>
<dbReference type="Gene3D" id="1.10.10.60">
    <property type="entry name" value="Homeodomain-like"/>
    <property type="match status" value="1"/>
</dbReference>
<dbReference type="Gene3D" id="1.10.357.10">
    <property type="entry name" value="Tetracycline Repressor, domain 2"/>
    <property type="match status" value="1"/>
</dbReference>
<dbReference type="HAMAP" id="MF_01190">
    <property type="entry name" value="HTH_type_FabR"/>
    <property type="match status" value="1"/>
</dbReference>
<dbReference type="InterPro" id="IPR054129">
    <property type="entry name" value="DesT_TetR_C"/>
</dbReference>
<dbReference type="InterPro" id="IPR009057">
    <property type="entry name" value="Homeodomain-like_sf"/>
</dbReference>
<dbReference type="InterPro" id="IPR001647">
    <property type="entry name" value="HTH_TetR"/>
</dbReference>
<dbReference type="InterPro" id="IPR050692">
    <property type="entry name" value="HTH_transcr_repressor_FabR"/>
</dbReference>
<dbReference type="InterPro" id="IPR023764">
    <property type="entry name" value="Tscrpt_reg_HTH_FabR"/>
</dbReference>
<dbReference type="NCBIfam" id="NF008402">
    <property type="entry name" value="PRK11202.1"/>
    <property type="match status" value="1"/>
</dbReference>
<dbReference type="PANTHER" id="PTHR47752">
    <property type="entry name" value="HTH-TYPE TRANSCRIPTIONAL REPRESSOR FABR"/>
    <property type="match status" value="1"/>
</dbReference>
<dbReference type="PANTHER" id="PTHR47752:SF1">
    <property type="entry name" value="HTH-TYPE TRANSCRIPTIONAL REPRESSOR FABR"/>
    <property type="match status" value="1"/>
</dbReference>
<dbReference type="Pfam" id="PF21943">
    <property type="entry name" value="TetR_C_46"/>
    <property type="match status" value="1"/>
</dbReference>
<dbReference type="Pfam" id="PF00440">
    <property type="entry name" value="TetR_N"/>
    <property type="match status" value="1"/>
</dbReference>
<dbReference type="SUPFAM" id="SSF46689">
    <property type="entry name" value="Homeodomain-like"/>
    <property type="match status" value="1"/>
</dbReference>
<dbReference type="PROSITE" id="PS50977">
    <property type="entry name" value="HTH_TETR_2"/>
    <property type="match status" value="1"/>
</dbReference>
<keyword id="KW-0963">Cytoplasm</keyword>
<keyword id="KW-0238">DNA-binding</keyword>
<keyword id="KW-0275">Fatty acid biosynthesis</keyword>
<keyword id="KW-0276">Fatty acid metabolism</keyword>
<keyword id="KW-0444">Lipid biosynthesis</keyword>
<keyword id="KW-0443">Lipid metabolism</keyword>
<keyword id="KW-1185">Reference proteome</keyword>
<keyword id="KW-0678">Repressor</keyword>
<keyword id="KW-0804">Transcription</keyword>
<keyword id="KW-0805">Transcription regulation</keyword>
<organism>
    <name type="scientific">Escherichia coli O139:H28 (strain E24377A / ETEC)</name>
    <dbReference type="NCBI Taxonomy" id="331111"/>
    <lineage>
        <taxon>Bacteria</taxon>
        <taxon>Pseudomonadati</taxon>
        <taxon>Pseudomonadota</taxon>
        <taxon>Gammaproteobacteria</taxon>
        <taxon>Enterobacterales</taxon>
        <taxon>Enterobacteriaceae</taxon>
        <taxon>Escherichia</taxon>
    </lineage>
</organism>
<name>FABR_ECO24</name>
<protein>
    <recommendedName>
        <fullName evidence="1">HTH-type transcriptional repressor FabR</fullName>
    </recommendedName>
</protein>